<name>RL22_LACDA</name>
<dbReference type="EMBL" id="CR954253">
    <property type="protein sequence ID" value="CAI97236.1"/>
    <property type="molecule type" value="Genomic_DNA"/>
</dbReference>
<dbReference type="RefSeq" id="WP_002878207.1">
    <property type="nucleotide sequence ID" value="NZ_JQAV01000001.1"/>
</dbReference>
<dbReference type="SMR" id="Q1GBL3"/>
<dbReference type="STRING" id="390333.Ldb0401"/>
<dbReference type="GeneID" id="69668431"/>
<dbReference type="KEGG" id="ldb:Ldb0401"/>
<dbReference type="PATRIC" id="fig|390333.13.peg.389"/>
<dbReference type="eggNOG" id="COG0091">
    <property type="taxonomic scope" value="Bacteria"/>
</dbReference>
<dbReference type="HOGENOM" id="CLU_083987_3_3_9"/>
<dbReference type="BioCyc" id="LDEL390333:LDB_RS01700-MONOMER"/>
<dbReference type="Proteomes" id="UP000001259">
    <property type="component" value="Chromosome"/>
</dbReference>
<dbReference type="GO" id="GO:0022625">
    <property type="term" value="C:cytosolic large ribosomal subunit"/>
    <property type="evidence" value="ECO:0007669"/>
    <property type="project" value="TreeGrafter"/>
</dbReference>
<dbReference type="GO" id="GO:0019843">
    <property type="term" value="F:rRNA binding"/>
    <property type="evidence" value="ECO:0007669"/>
    <property type="project" value="UniProtKB-UniRule"/>
</dbReference>
<dbReference type="GO" id="GO:0003735">
    <property type="term" value="F:structural constituent of ribosome"/>
    <property type="evidence" value="ECO:0007669"/>
    <property type="project" value="InterPro"/>
</dbReference>
<dbReference type="GO" id="GO:0006412">
    <property type="term" value="P:translation"/>
    <property type="evidence" value="ECO:0007669"/>
    <property type="project" value="UniProtKB-UniRule"/>
</dbReference>
<dbReference type="CDD" id="cd00336">
    <property type="entry name" value="Ribosomal_L22"/>
    <property type="match status" value="1"/>
</dbReference>
<dbReference type="FunFam" id="3.90.470.10:FF:000001">
    <property type="entry name" value="50S ribosomal protein L22"/>
    <property type="match status" value="1"/>
</dbReference>
<dbReference type="Gene3D" id="3.90.470.10">
    <property type="entry name" value="Ribosomal protein L22/L17"/>
    <property type="match status" value="1"/>
</dbReference>
<dbReference type="HAMAP" id="MF_01331_B">
    <property type="entry name" value="Ribosomal_uL22_B"/>
    <property type="match status" value="1"/>
</dbReference>
<dbReference type="InterPro" id="IPR001063">
    <property type="entry name" value="Ribosomal_uL22"/>
</dbReference>
<dbReference type="InterPro" id="IPR005727">
    <property type="entry name" value="Ribosomal_uL22_bac/chlpt-type"/>
</dbReference>
<dbReference type="InterPro" id="IPR047867">
    <property type="entry name" value="Ribosomal_uL22_bac/org-type"/>
</dbReference>
<dbReference type="InterPro" id="IPR018260">
    <property type="entry name" value="Ribosomal_uL22_CS"/>
</dbReference>
<dbReference type="InterPro" id="IPR036394">
    <property type="entry name" value="Ribosomal_uL22_sf"/>
</dbReference>
<dbReference type="NCBIfam" id="TIGR01044">
    <property type="entry name" value="rplV_bact"/>
    <property type="match status" value="1"/>
</dbReference>
<dbReference type="PANTHER" id="PTHR13501">
    <property type="entry name" value="CHLOROPLAST 50S RIBOSOMAL PROTEIN L22-RELATED"/>
    <property type="match status" value="1"/>
</dbReference>
<dbReference type="PANTHER" id="PTHR13501:SF8">
    <property type="entry name" value="LARGE RIBOSOMAL SUBUNIT PROTEIN UL22M"/>
    <property type="match status" value="1"/>
</dbReference>
<dbReference type="Pfam" id="PF00237">
    <property type="entry name" value="Ribosomal_L22"/>
    <property type="match status" value="1"/>
</dbReference>
<dbReference type="SUPFAM" id="SSF54843">
    <property type="entry name" value="Ribosomal protein L22"/>
    <property type="match status" value="1"/>
</dbReference>
<dbReference type="PROSITE" id="PS00464">
    <property type="entry name" value="RIBOSOMAL_L22"/>
    <property type="match status" value="1"/>
</dbReference>
<accession>Q1GBL3</accession>
<proteinExistence type="inferred from homology"/>
<comment type="function">
    <text evidence="1">This protein binds specifically to 23S rRNA; its binding is stimulated by other ribosomal proteins, e.g. L4, L17, and L20. It is important during the early stages of 50S assembly. It makes multiple contacts with different domains of the 23S rRNA in the assembled 50S subunit and ribosome (By similarity).</text>
</comment>
<comment type="function">
    <text evidence="1">The globular domain of the protein is located near the polypeptide exit tunnel on the outside of the subunit, while an extended beta-hairpin is found that lines the wall of the exit tunnel in the center of the 70S ribosome.</text>
</comment>
<comment type="subunit">
    <text evidence="1">Part of the 50S ribosomal subunit.</text>
</comment>
<comment type="similarity">
    <text evidence="1">Belongs to the universal ribosomal protein uL22 family.</text>
</comment>
<protein>
    <recommendedName>
        <fullName evidence="1">Large ribosomal subunit protein uL22</fullName>
    </recommendedName>
    <alternativeName>
        <fullName evidence="2">50S ribosomal protein L22</fullName>
    </alternativeName>
</protein>
<sequence length="117" mass="12743">MAEQISSARAEARTVRIAPRKARLVVDLIRGKSVAEALAILKFTPKAASPIVEKVLRSAVANAEHNYDLESANLYVSEAYVNEGATLKRFRPRAKGSASPIMKRTSHVVVVVSELND</sequence>
<keyword id="KW-1185">Reference proteome</keyword>
<keyword id="KW-0687">Ribonucleoprotein</keyword>
<keyword id="KW-0689">Ribosomal protein</keyword>
<keyword id="KW-0694">RNA-binding</keyword>
<keyword id="KW-0699">rRNA-binding</keyword>
<evidence type="ECO:0000255" key="1">
    <source>
        <dbReference type="HAMAP-Rule" id="MF_01331"/>
    </source>
</evidence>
<evidence type="ECO:0000305" key="2"/>
<organism>
    <name type="scientific">Lactobacillus delbrueckii subsp. bulgaricus (strain ATCC 11842 / DSM 20081 / BCRC 10696 / JCM 1002 / NBRC 13953 / NCIMB 11778 / NCTC 12712 / WDCM 00102 / Lb 14)</name>
    <dbReference type="NCBI Taxonomy" id="390333"/>
    <lineage>
        <taxon>Bacteria</taxon>
        <taxon>Bacillati</taxon>
        <taxon>Bacillota</taxon>
        <taxon>Bacilli</taxon>
        <taxon>Lactobacillales</taxon>
        <taxon>Lactobacillaceae</taxon>
        <taxon>Lactobacillus</taxon>
    </lineage>
</organism>
<gene>
    <name evidence="1" type="primary">rplV</name>
    <name type="ordered locus">Ldb0401</name>
</gene>
<feature type="chain" id="PRO_1000052590" description="Large ribosomal subunit protein uL22">
    <location>
        <begin position="1"/>
        <end position="117"/>
    </location>
</feature>
<reference key="1">
    <citation type="journal article" date="2006" name="Proc. Natl. Acad. Sci. U.S.A.">
        <title>The complete genome sequence of Lactobacillus bulgaricus reveals extensive and ongoing reductive evolution.</title>
        <authorList>
            <person name="van de Guchte M."/>
            <person name="Penaud S."/>
            <person name="Grimaldi C."/>
            <person name="Barbe V."/>
            <person name="Bryson K."/>
            <person name="Nicolas P."/>
            <person name="Robert C."/>
            <person name="Oztas S."/>
            <person name="Mangenot S."/>
            <person name="Couloux A."/>
            <person name="Loux V."/>
            <person name="Dervyn R."/>
            <person name="Bossy R."/>
            <person name="Bolotin A."/>
            <person name="Batto J.-M."/>
            <person name="Walunas T."/>
            <person name="Gibrat J.-F."/>
            <person name="Bessieres P."/>
            <person name="Weissenbach J."/>
            <person name="Ehrlich S.D."/>
            <person name="Maguin E."/>
        </authorList>
    </citation>
    <scope>NUCLEOTIDE SEQUENCE [LARGE SCALE GENOMIC DNA]</scope>
    <source>
        <strain>ATCC 11842 / DSM 20081 / BCRC 10696 / JCM 1002 / NBRC 13953 / NCIMB 11778 / NCTC 12712 / WDCM 00102 / Lb 14</strain>
    </source>
</reference>